<comment type="function">
    <text evidence="1">Catalyzes the conversion of D-ribulose 5-phosphate to formate and 3,4-dihydroxy-2-butanone 4-phosphate.</text>
</comment>
<comment type="catalytic activity">
    <reaction evidence="1">
        <text>D-ribulose 5-phosphate = (2S)-2-hydroxy-3-oxobutyl phosphate + formate + H(+)</text>
        <dbReference type="Rhea" id="RHEA:18457"/>
        <dbReference type="ChEBI" id="CHEBI:15378"/>
        <dbReference type="ChEBI" id="CHEBI:15740"/>
        <dbReference type="ChEBI" id="CHEBI:58121"/>
        <dbReference type="ChEBI" id="CHEBI:58830"/>
        <dbReference type="EC" id="4.1.99.12"/>
    </reaction>
</comment>
<comment type="cofactor">
    <cofactor evidence="1">
        <name>Mg(2+)</name>
        <dbReference type="ChEBI" id="CHEBI:18420"/>
    </cofactor>
    <cofactor evidence="1">
        <name>Mn(2+)</name>
        <dbReference type="ChEBI" id="CHEBI:29035"/>
    </cofactor>
    <text evidence="1">Binds 2 divalent metal cations per subunit. Magnesium or manganese.</text>
</comment>
<comment type="pathway">
    <text evidence="1">Cofactor biosynthesis; riboflavin biosynthesis; 2-hydroxy-3-oxobutyl phosphate from D-ribulose 5-phosphate: step 1/1.</text>
</comment>
<comment type="subunit">
    <text evidence="1">Homodimer.</text>
</comment>
<comment type="similarity">
    <text evidence="1">Belongs to the DHBP synthase family.</text>
</comment>
<protein>
    <recommendedName>
        <fullName evidence="1">3,4-dihydroxy-2-butanone 4-phosphate synthase</fullName>
        <shortName evidence="1">DHBP synthase</shortName>
        <ecNumber evidence="1">4.1.99.12</ecNumber>
    </recommendedName>
</protein>
<dbReference type="EC" id="4.1.99.12" evidence="1"/>
<dbReference type="EMBL" id="CP000026">
    <property type="protein sequence ID" value="AAV78898.1"/>
    <property type="molecule type" value="Genomic_DNA"/>
</dbReference>
<dbReference type="RefSeq" id="WP_001076973.1">
    <property type="nucleotide sequence ID" value="NC_006511.1"/>
</dbReference>
<dbReference type="SMR" id="Q5PMU5"/>
<dbReference type="KEGG" id="spt:SPA3063"/>
<dbReference type="HOGENOM" id="CLU_020273_3_0_6"/>
<dbReference type="UniPathway" id="UPA00275">
    <property type="reaction ID" value="UER00399"/>
</dbReference>
<dbReference type="Proteomes" id="UP000008185">
    <property type="component" value="Chromosome"/>
</dbReference>
<dbReference type="GO" id="GO:0005829">
    <property type="term" value="C:cytosol"/>
    <property type="evidence" value="ECO:0007669"/>
    <property type="project" value="TreeGrafter"/>
</dbReference>
<dbReference type="GO" id="GO:0008686">
    <property type="term" value="F:3,4-dihydroxy-2-butanone-4-phosphate synthase activity"/>
    <property type="evidence" value="ECO:0007669"/>
    <property type="project" value="UniProtKB-UniRule"/>
</dbReference>
<dbReference type="GO" id="GO:0000287">
    <property type="term" value="F:magnesium ion binding"/>
    <property type="evidence" value="ECO:0007669"/>
    <property type="project" value="UniProtKB-UniRule"/>
</dbReference>
<dbReference type="GO" id="GO:0030145">
    <property type="term" value="F:manganese ion binding"/>
    <property type="evidence" value="ECO:0007669"/>
    <property type="project" value="UniProtKB-UniRule"/>
</dbReference>
<dbReference type="GO" id="GO:0009231">
    <property type="term" value="P:riboflavin biosynthetic process"/>
    <property type="evidence" value="ECO:0007669"/>
    <property type="project" value="UniProtKB-UniRule"/>
</dbReference>
<dbReference type="FunFam" id="3.90.870.10:FF:000002">
    <property type="entry name" value="3,4-dihydroxy-2-butanone 4-phosphate synthase"/>
    <property type="match status" value="1"/>
</dbReference>
<dbReference type="Gene3D" id="3.90.870.10">
    <property type="entry name" value="DHBP synthase"/>
    <property type="match status" value="1"/>
</dbReference>
<dbReference type="HAMAP" id="MF_00180">
    <property type="entry name" value="RibB"/>
    <property type="match status" value="1"/>
</dbReference>
<dbReference type="InterPro" id="IPR017945">
    <property type="entry name" value="DHBP_synth_RibB-like_a/b_dom"/>
</dbReference>
<dbReference type="InterPro" id="IPR000422">
    <property type="entry name" value="DHBP_synthase_RibB"/>
</dbReference>
<dbReference type="NCBIfam" id="TIGR00506">
    <property type="entry name" value="ribB"/>
    <property type="match status" value="1"/>
</dbReference>
<dbReference type="PANTHER" id="PTHR21327:SF38">
    <property type="entry name" value="3,4-DIHYDROXY-2-BUTANONE 4-PHOSPHATE SYNTHASE"/>
    <property type="match status" value="1"/>
</dbReference>
<dbReference type="PANTHER" id="PTHR21327">
    <property type="entry name" value="GTP CYCLOHYDROLASE II-RELATED"/>
    <property type="match status" value="1"/>
</dbReference>
<dbReference type="Pfam" id="PF00926">
    <property type="entry name" value="DHBP_synthase"/>
    <property type="match status" value="1"/>
</dbReference>
<dbReference type="SUPFAM" id="SSF55821">
    <property type="entry name" value="YrdC/RibB"/>
    <property type="match status" value="1"/>
</dbReference>
<organism>
    <name type="scientific">Salmonella paratyphi A (strain ATCC 9150 / SARB42)</name>
    <dbReference type="NCBI Taxonomy" id="295319"/>
    <lineage>
        <taxon>Bacteria</taxon>
        <taxon>Pseudomonadati</taxon>
        <taxon>Pseudomonadota</taxon>
        <taxon>Gammaproteobacteria</taxon>
        <taxon>Enterobacterales</taxon>
        <taxon>Enterobacteriaceae</taxon>
        <taxon>Salmonella</taxon>
    </lineage>
</organism>
<name>RIBB_SALPA</name>
<proteinExistence type="inferred from homology"/>
<sequence length="217" mass="23322">MNQTLLSSFGTPFERVELALDALREGRGVMVLDDEDRENEGDMIFPAEIMTVEQMALTIRHGSGIVCLCITEDRRKQLDLPMMVENNTSAYGTGFTVTIEAAEGVTTGVSAADRVTTVRAAIKDGAKPSDLNRPGHVFPLRAQAGGVLTRGGHTEATIDLMTLAGFKPAGVLCELTNDDGTMARAPECIAFAGQHNMAVVTIEDLVAYRQAHERKAS</sequence>
<feature type="chain" id="PRO_1000040624" description="3,4-dihydroxy-2-butanone 4-phosphate synthase">
    <location>
        <begin position="1"/>
        <end position="217"/>
    </location>
</feature>
<feature type="binding site" evidence="1">
    <location>
        <begin position="37"/>
        <end position="38"/>
    </location>
    <ligand>
        <name>D-ribulose 5-phosphate</name>
        <dbReference type="ChEBI" id="CHEBI:58121"/>
    </ligand>
</feature>
<feature type="binding site" evidence="1">
    <location>
        <position position="38"/>
    </location>
    <ligand>
        <name>Mg(2+)</name>
        <dbReference type="ChEBI" id="CHEBI:18420"/>
        <label>1</label>
    </ligand>
</feature>
<feature type="binding site" evidence="1">
    <location>
        <position position="38"/>
    </location>
    <ligand>
        <name>Mg(2+)</name>
        <dbReference type="ChEBI" id="CHEBI:18420"/>
        <label>2</label>
    </ligand>
</feature>
<feature type="binding site" evidence="1">
    <location>
        <position position="42"/>
    </location>
    <ligand>
        <name>D-ribulose 5-phosphate</name>
        <dbReference type="ChEBI" id="CHEBI:58121"/>
    </ligand>
</feature>
<feature type="binding site" evidence="1">
    <location>
        <begin position="150"/>
        <end position="154"/>
    </location>
    <ligand>
        <name>D-ribulose 5-phosphate</name>
        <dbReference type="ChEBI" id="CHEBI:58121"/>
    </ligand>
</feature>
<feature type="binding site" evidence="1">
    <location>
        <position position="153"/>
    </location>
    <ligand>
        <name>Mg(2+)</name>
        <dbReference type="ChEBI" id="CHEBI:18420"/>
        <label>2</label>
    </ligand>
</feature>
<feature type="binding site" evidence="1">
    <location>
        <position position="174"/>
    </location>
    <ligand>
        <name>D-ribulose 5-phosphate</name>
        <dbReference type="ChEBI" id="CHEBI:58121"/>
    </ligand>
</feature>
<feature type="site" description="Essential for catalytic activity" evidence="1">
    <location>
        <position position="136"/>
    </location>
</feature>
<feature type="site" description="Essential for catalytic activity" evidence="1">
    <location>
        <position position="174"/>
    </location>
</feature>
<gene>
    <name evidence="1" type="primary">ribB</name>
    <name type="ordered locus">SPA3063</name>
</gene>
<keyword id="KW-0456">Lyase</keyword>
<keyword id="KW-0460">Magnesium</keyword>
<keyword id="KW-0464">Manganese</keyword>
<keyword id="KW-0479">Metal-binding</keyword>
<keyword id="KW-0686">Riboflavin biosynthesis</keyword>
<evidence type="ECO:0000255" key="1">
    <source>
        <dbReference type="HAMAP-Rule" id="MF_00180"/>
    </source>
</evidence>
<reference key="1">
    <citation type="journal article" date="2004" name="Nat. Genet.">
        <title>Comparison of genome degradation in Paratyphi A and Typhi, human-restricted serovars of Salmonella enterica that cause typhoid.</title>
        <authorList>
            <person name="McClelland M."/>
            <person name="Sanderson K.E."/>
            <person name="Clifton S.W."/>
            <person name="Latreille P."/>
            <person name="Porwollik S."/>
            <person name="Sabo A."/>
            <person name="Meyer R."/>
            <person name="Bieri T."/>
            <person name="Ozersky P."/>
            <person name="McLellan M."/>
            <person name="Harkins C.R."/>
            <person name="Wang C."/>
            <person name="Nguyen C."/>
            <person name="Berghoff A."/>
            <person name="Elliott G."/>
            <person name="Kohlberg S."/>
            <person name="Strong C."/>
            <person name="Du F."/>
            <person name="Carter J."/>
            <person name="Kremizki C."/>
            <person name="Layman D."/>
            <person name="Leonard S."/>
            <person name="Sun H."/>
            <person name="Fulton L."/>
            <person name="Nash W."/>
            <person name="Miner T."/>
            <person name="Minx P."/>
            <person name="Delehaunty K."/>
            <person name="Fronick C."/>
            <person name="Magrini V."/>
            <person name="Nhan M."/>
            <person name="Warren W."/>
            <person name="Florea L."/>
            <person name="Spieth J."/>
            <person name="Wilson R.K."/>
        </authorList>
    </citation>
    <scope>NUCLEOTIDE SEQUENCE [LARGE SCALE GENOMIC DNA]</scope>
    <source>
        <strain>ATCC 9150 / SARB42</strain>
    </source>
</reference>
<accession>Q5PMU5</accession>